<evidence type="ECO:0000250" key="1">
    <source>
        <dbReference type="UniProtKB" id="O04385"/>
    </source>
</evidence>
<evidence type="ECO:0000255" key="2">
    <source>
        <dbReference type="PROSITE-ProRule" id="PRU01020"/>
    </source>
</evidence>
<evidence type="ECO:0000269" key="3">
    <source>
    </source>
</evidence>
<evidence type="ECO:0000269" key="4">
    <source>
    </source>
</evidence>
<evidence type="ECO:0000269" key="5">
    <source>
    </source>
</evidence>
<evidence type="ECO:0000269" key="6">
    <source>
    </source>
</evidence>
<evidence type="ECO:0000303" key="7">
    <source>
    </source>
</evidence>
<accession>D7PI18</accession>
<dbReference type="EC" id="2.1.1.-" evidence="5"/>
<dbReference type="EMBL" id="GU574478">
    <property type="protein sequence ID" value="ADI24956.1"/>
    <property type="molecule type" value="Genomic_DNA"/>
</dbReference>
<dbReference type="SMR" id="D7PI18"/>
<dbReference type="BioCyc" id="MetaCyc:MONOMER-19270"/>
<dbReference type="UniPathway" id="UPA00213"/>
<dbReference type="GO" id="GO:0008171">
    <property type="term" value="F:O-methyltransferase activity"/>
    <property type="evidence" value="ECO:0007669"/>
    <property type="project" value="InterPro"/>
</dbReference>
<dbReference type="GO" id="GO:0046983">
    <property type="term" value="F:protein dimerization activity"/>
    <property type="evidence" value="ECO:0007669"/>
    <property type="project" value="InterPro"/>
</dbReference>
<dbReference type="GO" id="GO:0140878">
    <property type="term" value="P:griseofulvin biosynthetic process"/>
    <property type="evidence" value="ECO:0000314"/>
    <property type="project" value="GO_Central"/>
</dbReference>
<dbReference type="GO" id="GO:0032259">
    <property type="term" value="P:methylation"/>
    <property type="evidence" value="ECO:0007669"/>
    <property type="project" value="UniProtKB-KW"/>
</dbReference>
<dbReference type="GO" id="GO:0016114">
    <property type="term" value="P:terpenoid biosynthetic process"/>
    <property type="evidence" value="ECO:0007669"/>
    <property type="project" value="UniProtKB-UniPathway"/>
</dbReference>
<dbReference type="Gene3D" id="3.40.50.150">
    <property type="entry name" value="Vaccinia Virus protein VP39"/>
    <property type="match status" value="1"/>
</dbReference>
<dbReference type="Gene3D" id="1.10.10.10">
    <property type="entry name" value="Winged helix-like DNA-binding domain superfamily/Winged helix DNA-binding domain"/>
    <property type="match status" value="1"/>
</dbReference>
<dbReference type="InterPro" id="IPR016461">
    <property type="entry name" value="COMT-like"/>
</dbReference>
<dbReference type="InterPro" id="IPR001077">
    <property type="entry name" value="O_MeTrfase_dom"/>
</dbReference>
<dbReference type="InterPro" id="IPR012967">
    <property type="entry name" value="Plant_O-MeTrfase_dimerisation"/>
</dbReference>
<dbReference type="InterPro" id="IPR029063">
    <property type="entry name" value="SAM-dependent_MTases_sf"/>
</dbReference>
<dbReference type="InterPro" id="IPR036388">
    <property type="entry name" value="WH-like_DNA-bd_sf"/>
</dbReference>
<dbReference type="InterPro" id="IPR036390">
    <property type="entry name" value="WH_DNA-bd_sf"/>
</dbReference>
<dbReference type="PANTHER" id="PTHR43712:SF2">
    <property type="entry name" value="O-METHYLTRANSFERASE CICE"/>
    <property type="match status" value="1"/>
</dbReference>
<dbReference type="PANTHER" id="PTHR43712">
    <property type="entry name" value="PUTATIVE (AFU_ORTHOLOGUE AFUA_4G14580)-RELATED"/>
    <property type="match status" value="1"/>
</dbReference>
<dbReference type="Pfam" id="PF08100">
    <property type="entry name" value="Dimerisation"/>
    <property type="match status" value="1"/>
</dbReference>
<dbReference type="Pfam" id="PF00891">
    <property type="entry name" value="Methyltransf_2"/>
    <property type="match status" value="1"/>
</dbReference>
<dbReference type="SUPFAM" id="SSF53335">
    <property type="entry name" value="S-adenosyl-L-methionine-dependent methyltransferases"/>
    <property type="match status" value="1"/>
</dbReference>
<dbReference type="SUPFAM" id="SSF46785">
    <property type="entry name" value="Winged helix' DNA-binding domain"/>
    <property type="match status" value="1"/>
</dbReference>
<dbReference type="PROSITE" id="PS51683">
    <property type="entry name" value="SAM_OMT_II"/>
    <property type="match status" value="1"/>
</dbReference>
<name>GSFD_PENAE</name>
<keyword id="KW-0489">Methyltransferase</keyword>
<keyword id="KW-0949">S-adenosyl-L-methionine</keyword>
<keyword id="KW-0808">Transferase</keyword>
<reference key="1">
    <citation type="journal article" date="2010" name="Chem. Biol.">
        <title>Identification of the viridicatumtoxin and griseofulvin gene clusters from Penicillium aethiopicum.</title>
        <authorList>
            <person name="Chooi Y.H."/>
            <person name="Cacho R."/>
            <person name="Tang Y."/>
        </authorList>
    </citation>
    <scope>NUCLEOTIDE SEQUENCE [GENOMIC DNA]</scope>
    <scope>FUNCTION</scope>
    <scope>DISRUPTION PHENOTYPE</scope>
    <source>
        <strain>IBT 5753</strain>
    </source>
</reference>
<reference key="2">
    <citation type="journal article" date="1958" name="Nature">
        <title>Experimental ringworm in guinea pigs: oral treatment with griseofulvin.</title>
        <authorList>
            <person name="Gentles J.C."/>
        </authorList>
    </citation>
    <scope>BIOTECHNOLOGY</scope>
</reference>
<reference key="3">
    <citation type="journal article" date="1973" name="Nature">
        <title>Griseofulvin inhibits fungal mitosis.</title>
        <authorList>
            <person name="Gull K."/>
            <person name="Trinci A.P."/>
        </authorList>
    </citation>
    <scope>BIOTECHNOLOGY</scope>
</reference>
<reference key="4">
    <citation type="journal article" date="2013" name="ACS Chem. Biol.">
        <title>Complexity generation in fungal polyketide biosynthesis: a spirocycle-forming P450 in the concise pathway to the antifungal drug griseofulvin.</title>
        <authorList>
            <person name="Cacho R.A."/>
            <person name="Chooi Y.H."/>
            <person name="Zhou H."/>
            <person name="Tang Y."/>
        </authorList>
    </citation>
    <scope>FUNCTION</scope>
    <scope>DISRUPTION PHENOTYPE</scope>
    <scope>CATALYTIC ACTIVITY</scope>
</reference>
<comment type="function">
    <text evidence="4 5">O-methyltransferase; part of the gene cluster that mediates the biosynthesis of griseofulvin, an important antifungal drug that has been in use for a long time for treating dermatophyte infections (PubMed:20534346, PubMed:23978092). The first step of the pathway is the formation of the heptaketide backbone by gsfA which is initiated by priming with acetyl-CoA, followed by sequential condensations of 6 malonyl-CoA units (PubMed:20534346, PubMed:23978092). The resulting benzophenone can undergo a spontaneous dehydration to form norlichexanthone (PubMed:23978092). However, the true precursor for the griseofulvin biosynthesis is not norlichexanthone, but the heptaketide benzophenone that is O-methylated at 3-OH by gsfB to produce griseophenone D which is further methylated at 9-OH by gsfC to yield griseophenone C (PubMed:23978092). Griseophenone C is then substrate of halogenase gsfI which is responsible for the regio-specific chlorination at the C13 position to form griseophenone B (PubMed:23978092). The cytochrome P450 gsfF catalyzes the coupling of orcinol and phloroglucinol rings in griseophenone B to form desmethyl-dehydrogriseofulvin A which is further methylated at 5-OH by gsfD to yield dehydrogriseofulvin (PubMed:23978092). Finally, gsfE performs stereospecific reduction of enone 18 of dehydrogriseofulvin to afford the final product griseofulvin (PubMed:23978092).</text>
</comment>
<comment type="catalytic activity">
    <reaction evidence="5">
        <text>desmethyl-dehydrogriseofulvin + S-adenosyl-L-methionine = dehydrogriseofulvin + S-adenosyl-L-homocysteine + H(+)</text>
        <dbReference type="Rhea" id="RHEA:73939"/>
        <dbReference type="ChEBI" id="CHEBI:15378"/>
        <dbReference type="ChEBI" id="CHEBI:57856"/>
        <dbReference type="ChEBI" id="CHEBI:59789"/>
        <dbReference type="ChEBI" id="CHEBI:81999"/>
        <dbReference type="ChEBI" id="CHEBI:193067"/>
    </reaction>
    <physiologicalReaction direction="left-to-right" evidence="5">
        <dbReference type="Rhea" id="RHEA:73940"/>
    </physiologicalReaction>
</comment>
<comment type="pathway">
    <text evidence="4 5">Secondary metabolite biosynthesis; terpenoid biosynthesis.</text>
</comment>
<comment type="disruption phenotype">
    <text evidence="5">Impairs the production of griseofulvin, but accumulates the intermediates desmethyl-dechlorogriseofulvin, desmethyl- dehydrogriseofulvin A and desmethyl-griseofulvin (PubMed:23978092).</text>
</comment>
<comment type="biotechnology">
    <text evidence="3 6">Griseofulvin is a spirocyclic fungal natural product used in treatment of fungal dermatophytes (PubMed:13577889, PubMed:4583105).</text>
</comment>
<comment type="similarity">
    <text evidence="2">Belongs to the class I-like SAM-binding methyltransferase superfamily. Cation-independent O-methyltransferase family.</text>
</comment>
<sequence length="378" mass="42330">MSTPEQWIQEFEALCSRASILFPSGIEDENIRIRALRIAEKAVHQLHTPMTFAEAQTWAPLELFGAGVACEMGIFDVLSKSSVPLSPVDIATELNTDPALVARIMRLLDAHYMVDQVTLGQYAANAITRDYVQPYRKGNVMTQVALMPSYFALPAWLRDNDYKVRPDANHCAWQVGANTTKTFWEMPRTTQEDDFVTFYPFEAVFSTSNVDDILFVDIGGGLGHQAMRVRSAFPRSRGRIIVQDLPQVTNKITTASLPDVEIMDHDMADPQPVKGARVYYLRGVLHNHADHISIKYLSQFAAAMSPESRLLIHEALATDLNPTKNITRFDLSMLASCGGAQRSEAEQKALLEKVGLEVSGVWSTPRDWSIMEARLKRE</sequence>
<protein>
    <recommendedName>
        <fullName evidence="7">O-methyltransferase gsfD</fullName>
        <ecNumber evidence="5">2.1.1.-</ecNumber>
    </recommendedName>
    <alternativeName>
        <fullName evidence="7">Griseofulvin synthesis protein D</fullName>
    </alternativeName>
</protein>
<gene>
    <name evidence="7" type="primary">gsfD</name>
</gene>
<feature type="chain" id="PRO_0000436723" description="O-methyltransferase gsfD">
    <location>
        <begin position="1"/>
        <end position="378"/>
    </location>
</feature>
<feature type="active site" description="Proton acceptor" evidence="2">
    <location>
        <position position="286"/>
    </location>
</feature>
<feature type="binding site" evidence="1">
    <location>
        <begin position="219"/>
        <end position="220"/>
    </location>
    <ligand>
        <name>S-adenosyl-L-methionine</name>
        <dbReference type="ChEBI" id="CHEBI:59789"/>
    </ligand>
</feature>
<feature type="binding site" evidence="2">
    <location>
        <position position="244"/>
    </location>
    <ligand>
        <name>S-adenosyl-L-methionine</name>
        <dbReference type="ChEBI" id="CHEBI:59789"/>
    </ligand>
</feature>
<feature type="binding site" evidence="1">
    <location>
        <begin position="266"/>
        <end position="267"/>
    </location>
    <ligand>
        <name>S-adenosyl-L-methionine</name>
        <dbReference type="ChEBI" id="CHEBI:59789"/>
    </ligand>
</feature>
<feature type="binding site" evidence="1">
    <location>
        <position position="282"/>
    </location>
    <ligand>
        <name>S-adenosyl-L-methionine</name>
        <dbReference type="ChEBI" id="CHEBI:59789"/>
    </ligand>
</feature>
<proteinExistence type="evidence at protein level"/>
<organism>
    <name type="scientific">Penicillium aethiopicum</name>
    <dbReference type="NCBI Taxonomy" id="36650"/>
    <lineage>
        <taxon>Eukaryota</taxon>
        <taxon>Fungi</taxon>
        <taxon>Dikarya</taxon>
        <taxon>Ascomycota</taxon>
        <taxon>Pezizomycotina</taxon>
        <taxon>Eurotiomycetes</taxon>
        <taxon>Eurotiomycetidae</taxon>
        <taxon>Eurotiales</taxon>
        <taxon>Aspergillaceae</taxon>
        <taxon>Penicillium</taxon>
    </lineage>
</organism>